<dbReference type="EC" id="3.6.4.13"/>
<dbReference type="EMBL" id="CU329670">
    <property type="protein sequence ID" value="CAA91889.1"/>
    <property type="molecule type" value="Genomic_DNA"/>
</dbReference>
<dbReference type="PIR" id="S62561">
    <property type="entry name" value="S62561"/>
</dbReference>
<dbReference type="RefSeq" id="NP_593214.1">
    <property type="nucleotide sequence ID" value="NM_001018610.2"/>
</dbReference>
<dbReference type="SMR" id="Q09903"/>
<dbReference type="BioGRID" id="279586">
    <property type="interactions" value="3"/>
</dbReference>
<dbReference type="FunCoup" id="Q09903">
    <property type="interactions" value="526"/>
</dbReference>
<dbReference type="STRING" id="284812.Q09903"/>
<dbReference type="PaxDb" id="4896-SPAC30D11.03.1"/>
<dbReference type="EnsemblFungi" id="SPAC30D11.03.1">
    <property type="protein sequence ID" value="SPAC30D11.03.1:pep"/>
    <property type="gene ID" value="SPAC30D11.03"/>
</dbReference>
<dbReference type="GeneID" id="2543155"/>
<dbReference type="KEGG" id="spo:2543155"/>
<dbReference type="PomBase" id="SPAC30D11.03"/>
<dbReference type="VEuPathDB" id="FungiDB:SPAC30D11.03"/>
<dbReference type="eggNOG" id="KOG0338">
    <property type="taxonomic scope" value="Eukaryota"/>
</dbReference>
<dbReference type="HOGENOM" id="CLU_003041_3_1_1"/>
<dbReference type="InParanoid" id="Q09903"/>
<dbReference type="OMA" id="MIDPPKQ"/>
<dbReference type="PhylomeDB" id="Q09903"/>
<dbReference type="PRO" id="PR:Q09903"/>
<dbReference type="Proteomes" id="UP000002485">
    <property type="component" value="Chromosome I"/>
</dbReference>
<dbReference type="GO" id="GO:0005730">
    <property type="term" value="C:nucleolus"/>
    <property type="evidence" value="ECO:0007005"/>
    <property type="project" value="PomBase"/>
</dbReference>
<dbReference type="GO" id="GO:0005634">
    <property type="term" value="C:nucleus"/>
    <property type="evidence" value="ECO:0007005"/>
    <property type="project" value="PomBase"/>
</dbReference>
<dbReference type="GO" id="GO:0005524">
    <property type="term" value="F:ATP binding"/>
    <property type="evidence" value="ECO:0000255"/>
    <property type="project" value="PomBase"/>
</dbReference>
<dbReference type="GO" id="GO:0016887">
    <property type="term" value="F:ATP hydrolysis activity"/>
    <property type="evidence" value="ECO:0007669"/>
    <property type="project" value="RHEA"/>
</dbReference>
<dbReference type="GO" id="GO:0003723">
    <property type="term" value="F:RNA binding"/>
    <property type="evidence" value="ECO:0000303"/>
    <property type="project" value="PomBase"/>
</dbReference>
<dbReference type="GO" id="GO:0003724">
    <property type="term" value="F:RNA helicase activity"/>
    <property type="evidence" value="ECO:0000266"/>
    <property type="project" value="PomBase"/>
</dbReference>
<dbReference type="GO" id="GO:0006364">
    <property type="term" value="P:rRNA processing"/>
    <property type="evidence" value="ECO:0000266"/>
    <property type="project" value="PomBase"/>
</dbReference>
<dbReference type="CDD" id="cd17947">
    <property type="entry name" value="DEADc_DDX27"/>
    <property type="match status" value="1"/>
</dbReference>
<dbReference type="CDD" id="cd18787">
    <property type="entry name" value="SF2_C_DEAD"/>
    <property type="match status" value="1"/>
</dbReference>
<dbReference type="FunFam" id="3.40.50.300:FF:000842">
    <property type="entry name" value="ATP-dependent RNA helicase DRS1"/>
    <property type="match status" value="1"/>
</dbReference>
<dbReference type="Gene3D" id="3.40.50.300">
    <property type="entry name" value="P-loop containing nucleotide triphosphate hydrolases"/>
    <property type="match status" value="2"/>
</dbReference>
<dbReference type="InterPro" id="IPR011545">
    <property type="entry name" value="DEAD/DEAH_box_helicase_dom"/>
</dbReference>
<dbReference type="InterPro" id="IPR050079">
    <property type="entry name" value="DEAD_box_RNA_helicase"/>
</dbReference>
<dbReference type="InterPro" id="IPR014001">
    <property type="entry name" value="Helicase_ATP-bd"/>
</dbReference>
<dbReference type="InterPro" id="IPR001650">
    <property type="entry name" value="Helicase_C-like"/>
</dbReference>
<dbReference type="InterPro" id="IPR027417">
    <property type="entry name" value="P-loop_NTPase"/>
</dbReference>
<dbReference type="InterPro" id="IPR000629">
    <property type="entry name" value="RNA-helicase_DEAD-box_CS"/>
</dbReference>
<dbReference type="InterPro" id="IPR014014">
    <property type="entry name" value="RNA_helicase_DEAD_Q_motif"/>
</dbReference>
<dbReference type="PANTHER" id="PTHR47959:SF1">
    <property type="entry name" value="ATP-DEPENDENT RNA HELICASE DBPA"/>
    <property type="match status" value="1"/>
</dbReference>
<dbReference type="PANTHER" id="PTHR47959">
    <property type="entry name" value="ATP-DEPENDENT RNA HELICASE RHLE-RELATED"/>
    <property type="match status" value="1"/>
</dbReference>
<dbReference type="Pfam" id="PF00270">
    <property type="entry name" value="DEAD"/>
    <property type="match status" value="1"/>
</dbReference>
<dbReference type="Pfam" id="PF00271">
    <property type="entry name" value="Helicase_C"/>
    <property type="match status" value="1"/>
</dbReference>
<dbReference type="SMART" id="SM00487">
    <property type="entry name" value="DEXDc"/>
    <property type="match status" value="1"/>
</dbReference>
<dbReference type="SMART" id="SM00490">
    <property type="entry name" value="HELICc"/>
    <property type="match status" value="1"/>
</dbReference>
<dbReference type="SUPFAM" id="SSF52540">
    <property type="entry name" value="P-loop containing nucleoside triphosphate hydrolases"/>
    <property type="match status" value="1"/>
</dbReference>
<dbReference type="PROSITE" id="PS00039">
    <property type="entry name" value="DEAD_ATP_HELICASE"/>
    <property type="match status" value="1"/>
</dbReference>
<dbReference type="PROSITE" id="PS51192">
    <property type="entry name" value="HELICASE_ATP_BIND_1"/>
    <property type="match status" value="1"/>
</dbReference>
<dbReference type="PROSITE" id="PS51194">
    <property type="entry name" value="HELICASE_CTER"/>
    <property type="match status" value="1"/>
</dbReference>
<dbReference type="PROSITE" id="PS51195">
    <property type="entry name" value="Q_MOTIF"/>
    <property type="match status" value="1"/>
</dbReference>
<name>DRS1_SCHPO</name>
<sequence length="754" mass="85453">MLWNTQYFRIEGMISLGWPRLAKTSILKFVPIAQNHRIRKMKVQDDFILTIDDSEDDIHYDDYDADAVDEEMPSNVELKKKSKKATPAKDSDFNGEFLFEADVNKDLSSATDMNWDFDMGSKTESNRASNTVDLDAIISRNRKPDDDEFPSSFPSEEELQEPEQENIDSDDEDLAIDGFGAGAIAENEDESSQDESESEEEDDITEPVPSFANISTQDFNSDSAAGSSDSEEDEEEIAKKNAFFAEGDKEKSMMTTTHSSFQSMNLSRPILKGLSNLGFEVPTQIQDKTIPLALLGKDIVGAAVTGSGKTAAFIVPILERLLYRPKKVPTTRVLILCPTRELAMQCHSVATKIASFTDIMVCLCIGGLSLKLQEQELRKRPDIVIATPGRFIDHMRNSQGFTVENIEIMVMDEADRMLEDGFADELNEIIQACPKSRQTMLFSATMTDKVDDLIRLSLNRPVRVFVDNKKTTAKLLTQEFVRVRPQRELLRPAMLIYLCKELFHRRTIIFFRSKAFAHKMRVIFGLLSLNATEIHGSLSQEQRVRALEDFRDGKCNYLLATDVASRGIDIKGIEVVINYEAPATHEVYLHRVGRTARAGRSGRAITLAGEGDRKVLKGVFKNSSAQNTKLVNRNLDFNKVEKFGKEIEELEPVVQKVLDEEKQERELKIAERDLKKGENIMKYGDEIRSRPARTWFQSEKDKQASKASEAKDKKSLAKRKKQMEKEEVPRAYKKTKNDRLSNKKSTKKSKSKRK</sequence>
<proteinExistence type="inferred from homology"/>
<evidence type="ECO:0000250" key="1"/>
<evidence type="ECO:0000255" key="2"/>
<evidence type="ECO:0000255" key="3">
    <source>
        <dbReference type="PROSITE-ProRule" id="PRU00541"/>
    </source>
</evidence>
<evidence type="ECO:0000255" key="4">
    <source>
        <dbReference type="PROSITE-ProRule" id="PRU00542"/>
    </source>
</evidence>
<evidence type="ECO:0000256" key="5">
    <source>
        <dbReference type="SAM" id="MobiDB-lite"/>
    </source>
</evidence>
<evidence type="ECO:0000305" key="6"/>
<reference key="1">
    <citation type="journal article" date="2002" name="Nature">
        <title>The genome sequence of Schizosaccharomyces pombe.</title>
        <authorList>
            <person name="Wood V."/>
            <person name="Gwilliam R."/>
            <person name="Rajandream M.A."/>
            <person name="Lyne M.H."/>
            <person name="Lyne R."/>
            <person name="Stewart A."/>
            <person name="Sgouros J.G."/>
            <person name="Peat N."/>
            <person name="Hayles J."/>
            <person name="Baker S.G."/>
            <person name="Basham D."/>
            <person name="Bowman S."/>
            <person name="Brooks K."/>
            <person name="Brown D."/>
            <person name="Brown S."/>
            <person name="Chillingworth T."/>
            <person name="Churcher C.M."/>
            <person name="Collins M."/>
            <person name="Connor R."/>
            <person name="Cronin A."/>
            <person name="Davis P."/>
            <person name="Feltwell T."/>
            <person name="Fraser A."/>
            <person name="Gentles S."/>
            <person name="Goble A."/>
            <person name="Hamlin N."/>
            <person name="Harris D.E."/>
            <person name="Hidalgo J."/>
            <person name="Hodgson G."/>
            <person name="Holroyd S."/>
            <person name="Hornsby T."/>
            <person name="Howarth S."/>
            <person name="Huckle E.J."/>
            <person name="Hunt S."/>
            <person name="Jagels K."/>
            <person name="James K.D."/>
            <person name="Jones L."/>
            <person name="Jones M."/>
            <person name="Leather S."/>
            <person name="McDonald S."/>
            <person name="McLean J."/>
            <person name="Mooney P."/>
            <person name="Moule S."/>
            <person name="Mungall K.L."/>
            <person name="Murphy L.D."/>
            <person name="Niblett D."/>
            <person name="Odell C."/>
            <person name="Oliver K."/>
            <person name="O'Neil S."/>
            <person name="Pearson D."/>
            <person name="Quail M.A."/>
            <person name="Rabbinowitsch E."/>
            <person name="Rutherford K.M."/>
            <person name="Rutter S."/>
            <person name="Saunders D."/>
            <person name="Seeger K."/>
            <person name="Sharp S."/>
            <person name="Skelton J."/>
            <person name="Simmonds M.N."/>
            <person name="Squares R."/>
            <person name="Squares S."/>
            <person name="Stevens K."/>
            <person name="Taylor K."/>
            <person name="Taylor R.G."/>
            <person name="Tivey A."/>
            <person name="Walsh S.V."/>
            <person name="Warren T."/>
            <person name="Whitehead S."/>
            <person name="Woodward J.R."/>
            <person name="Volckaert G."/>
            <person name="Aert R."/>
            <person name="Robben J."/>
            <person name="Grymonprez B."/>
            <person name="Weltjens I."/>
            <person name="Vanstreels E."/>
            <person name="Rieger M."/>
            <person name="Schaefer M."/>
            <person name="Mueller-Auer S."/>
            <person name="Gabel C."/>
            <person name="Fuchs M."/>
            <person name="Duesterhoeft A."/>
            <person name="Fritzc C."/>
            <person name="Holzer E."/>
            <person name="Moestl D."/>
            <person name="Hilbert H."/>
            <person name="Borzym K."/>
            <person name="Langer I."/>
            <person name="Beck A."/>
            <person name="Lehrach H."/>
            <person name="Reinhardt R."/>
            <person name="Pohl T.M."/>
            <person name="Eger P."/>
            <person name="Zimmermann W."/>
            <person name="Wedler H."/>
            <person name="Wambutt R."/>
            <person name="Purnelle B."/>
            <person name="Goffeau A."/>
            <person name="Cadieu E."/>
            <person name="Dreano S."/>
            <person name="Gloux S."/>
            <person name="Lelaure V."/>
            <person name="Mottier S."/>
            <person name="Galibert F."/>
            <person name="Aves S.J."/>
            <person name="Xiang Z."/>
            <person name="Hunt C."/>
            <person name="Moore K."/>
            <person name="Hurst S.M."/>
            <person name="Lucas M."/>
            <person name="Rochet M."/>
            <person name="Gaillardin C."/>
            <person name="Tallada V.A."/>
            <person name="Garzon A."/>
            <person name="Thode G."/>
            <person name="Daga R.R."/>
            <person name="Cruzado L."/>
            <person name="Jimenez J."/>
            <person name="Sanchez M."/>
            <person name="del Rey F."/>
            <person name="Benito J."/>
            <person name="Dominguez A."/>
            <person name="Revuelta J.L."/>
            <person name="Moreno S."/>
            <person name="Armstrong J."/>
            <person name="Forsburg S.L."/>
            <person name="Cerutti L."/>
            <person name="Lowe T."/>
            <person name="McCombie W.R."/>
            <person name="Paulsen I."/>
            <person name="Potashkin J."/>
            <person name="Shpakovski G.V."/>
            <person name="Ussery D."/>
            <person name="Barrell B.G."/>
            <person name="Nurse P."/>
        </authorList>
    </citation>
    <scope>NUCLEOTIDE SEQUENCE [LARGE SCALE GENOMIC DNA]</scope>
    <source>
        <strain>972 / ATCC 24843</strain>
    </source>
</reference>
<gene>
    <name type="primary">drs1</name>
    <name type="ORF">SPAC30D11.03</name>
</gene>
<accession>Q09903</accession>
<feature type="chain" id="PRO_0000055086" description="ATP-dependent RNA helicase drs1">
    <location>
        <begin position="1"/>
        <end position="754"/>
    </location>
</feature>
<feature type="domain" description="Helicase ATP-binding" evidence="3">
    <location>
        <begin position="290"/>
        <end position="464"/>
    </location>
</feature>
<feature type="domain" description="Helicase C-terminal" evidence="4">
    <location>
        <begin position="475"/>
        <end position="641"/>
    </location>
</feature>
<feature type="region of interest" description="Disordered" evidence="5">
    <location>
        <begin position="121"/>
        <end position="237"/>
    </location>
</feature>
<feature type="region of interest" description="Disordered" evidence="5">
    <location>
        <begin position="692"/>
        <end position="754"/>
    </location>
</feature>
<feature type="coiled-coil region" evidence="2">
    <location>
        <begin position="655"/>
        <end position="728"/>
    </location>
</feature>
<feature type="short sequence motif" description="Q motif">
    <location>
        <begin position="259"/>
        <end position="287"/>
    </location>
</feature>
<feature type="short sequence motif" description="DEAD box">
    <location>
        <begin position="412"/>
        <end position="415"/>
    </location>
</feature>
<feature type="compositionally biased region" description="Acidic residues" evidence="5">
    <location>
        <begin position="155"/>
        <end position="175"/>
    </location>
</feature>
<feature type="compositionally biased region" description="Acidic residues" evidence="5">
    <location>
        <begin position="186"/>
        <end position="205"/>
    </location>
</feature>
<feature type="compositionally biased region" description="Basic and acidic residues" evidence="5">
    <location>
        <begin position="698"/>
        <end position="715"/>
    </location>
</feature>
<feature type="compositionally biased region" description="Basic and acidic residues" evidence="5">
    <location>
        <begin position="723"/>
        <end position="741"/>
    </location>
</feature>
<feature type="compositionally biased region" description="Basic residues" evidence="5">
    <location>
        <begin position="742"/>
        <end position="754"/>
    </location>
</feature>
<feature type="binding site" evidence="3">
    <location>
        <begin position="303"/>
        <end position="310"/>
    </location>
    <ligand>
        <name>ATP</name>
        <dbReference type="ChEBI" id="CHEBI:30616"/>
    </ligand>
</feature>
<comment type="function">
    <text evidence="1">ATP-binding RNA helicase involved in ribosome assembly.</text>
</comment>
<comment type="catalytic activity">
    <reaction>
        <text>ATP + H2O = ADP + phosphate + H(+)</text>
        <dbReference type="Rhea" id="RHEA:13065"/>
        <dbReference type="ChEBI" id="CHEBI:15377"/>
        <dbReference type="ChEBI" id="CHEBI:15378"/>
        <dbReference type="ChEBI" id="CHEBI:30616"/>
        <dbReference type="ChEBI" id="CHEBI:43474"/>
        <dbReference type="ChEBI" id="CHEBI:456216"/>
        <dbReference type="EC" id="3.6.4.13"/>
    </reaction>
</comment>
<comment type="subunit">
    <text evidence="1">Associates with pre-ribosomal particles.</text>
</comment>
<comment type="subcellular location">
    <subcellularLocation>
        <location evidence="1">Nucleus</location>
        <location evidence="1">Nucleolus</location>
    </subcellularLocation>
</comment>
<comment type="domain">
    <text>The Q motif is unique to and characteristic of the DEAD box family of RNA helicases and controls ATP binding and hydrolysis.</text>
</comment>
<comment type="similarity">
    <text evidence="6">Belongs to the DEAD box helicase family. DDX27/DRS1 subfamily.</text>
</comment>
<keyword id="KW-0067">ATP-binding</keyword>
<keyword id="KW-0175">Coiled coil</keyword>
<keyword id="KW-0347">Helicase</keyword>
<keyword id="KW-0378">Hydrolase</keyword>
<keyword id="KW-0547">Nucleotide-binding</keyword>
<keyword id="KW-0539">Nucleus</keyword>
<keyword id="KW-1185">Reference proteome</keyword>
<keyword id="KW-0690">Ribosome biogenesis</keyword>
<keyword id="KW-0694">RNA-binding</keyword>
<protein>
    <recommendedName>
        <fullName>ATP-dependent RNA helicase drs1</fullName>
        <ecNumber>3.6.4.13</ecNumber>
    </recommendedName>
</protein>
<organism>
    <name type="scientific">Schizosaccharomyces pombe (strain 972 / ATCC 24843)</name>
    <name type="common">Fission yeast</name>
    <dbReference type="NCBI Taxonomy" id="284812"/>
    <lineage>
        <taxon>Eukaryota</taxon>
        <taxon>Fungi</taxon>
        <taxon>Dikarya</taxon>
        <taxon>Ascomycota</taxon>
        <taxon>Taphrinomycotina</taxon>
        <taxon>Schizosaccharomycetes</taxon>
        <taxon>Schizosaccharomycetales</taxon>
        <taxon>Schizosaccharomycetaceae</taxon>
        <taxon>Schizosaccharomyces</taxon>
    </lineage>
</organism>